<dbReference type="EC" id="6.3.5.3" evidence="1"/>
<dbReference type="EMBL" id="FM211192">
    <property type="protein sequence ID" value="CAR72308.1"/>
    <property type="molecule type" value="Genomic_DNA"/>
</dbReference>
<dbReference type="SMR" id="B8ZSV5"/>
<dbReference type="KEGG" id="mlb:MLBr02211"/>
<dbReference type="HOGENOM" id="CLU_003100_0_1_11"/>
<dbReference type="UniPathway" id="UPA00074">
    <property type="reaction ID" value="UER00128"/>
</dbReference>
<dbReference type="Proteomes" id="UP000006900">
    <property type="component" value="Chromosome"/>
</dbReference>
<dbReference type="GO" id="GO:0005737">
    <property type="term" value="C:cytoplasm"/>
    <property type="evidence" value="ECO:0007669"/>
    <property type="project" value="UniProtKB-SubCell"/>
</dbReference>
<dbReference type="GO" id="GO:0005524">
    <property type="term" value="F:ATP binding"/>
    <property type="evidence" value="ECO:0007669"/>
    <property type="project" value="UniProtKB-UniRule"/>
</dbReference>
<dbReference type="GO" id="GO:0000287">
    <property type="term" value="F:magnesium ion binding"/>
    <property type="evidence" value="ECO:0007669"/>
    <property type="project" value="UniProtKB-UniRule"/>
</dbReference>
<dbReference type="GO" id="GO:0004642">
    <property type="term" value="F:phosphoribosylformylglycinamidine synthase activity"/>
    <property type="evidence" value="ECO:0007669"/>
    <property type="project" value="UniProtKB-UniRule"/>
</dbReference>
<dbReference type="GO" id="GO:0006189">
    <property type="term" value="P:'de novo' IMP biosynthetic process"/>
    <property type="evidence" value="ECO:0007669"/>
    <property type="project" value="UniProtKB-UniRule"/>
</dbReference>
<dbReference type="CDD" id="cd02203">
    <property type="entry name" value="PurL_repeat1"/>
    <property type="match status" value="1"/>
</dbReference>
<dbReference type="CDD" id="cd02204">
    <property type="entry name" value="PurL_repeat2"/>
    <property type="match status" value="1"/>
</dbReference>
<dbReference type="FunFam" id="3.30.1330.10:FF:000004">
    <property type="entry name" value="Phosphoribosylformylglycinamidine synthase subunit PurL"/>
    <property type="match status" value="1"/>
</dbReference>
<dbReference type="FunFam" id="3.30.1330.10:FF:000021">
    <property type="entry name" value="Phosphoribosylformylglycinamidine synthase subunit PurL"/>
    <property type="match status" value="1"/>
</dbReference>
<dbReference type="FunFam" id="3.90.650.10:FF:000009">
    <property type="entry name" value="Phosphoribosylformylglycinamidine synthase subunit PurL"/>
    <property type="match status" value="1"/>
</dbReference>
<dbReference type="Gene3D" id="3.90.650.10">
    <property type="entry name" value="PurM-like C-terminal domain"/>
    <property type="match status" value="2"/>
</dbReference>
<dbReference type="Gene3D" id="3.30.1330.10">
    <property type="entry name" value="PurM-like, N-terminal domain"/>
    <property type="match status" value="2"/>
</dbReference>
<dbReference type="HAMAP" id="MF_00420">
    <property type="entry name" value="PurL_2"/>
    <property type="match status" value="1"/>
</dbReference>
<dbReference type="InterPro" id="IPR010074">
    <property type="entry name" value="PRibForGlyAmidine_synth_PurL"/>
</dbReference>
<dbReference type="InterPro" id="IPR041609">
    <property type="entry name" value="PurL_linker"/>
</dbReference>
<dbReference type="InterPro" id="IPR010918">
    <property type="entry name" value="PurM-like_C_dom"/>
</dbReference>
<dbReference type="InterPro" id="IPR036676">
    <property type="entry name" value="PurM-like_C_sf"/>
</dbReference>
<dbReference type="InterPro" id="IPR016188">
    <property type="entry name" value="PurM-like_N"/>
</dbReference>
<dbReference type="InterPro" id="IPR036921">
    <property type="entry name" value="PurM-like_N_sf"/>
</dbReference>
<dbReference type="NCBIfam" id="TIGR01736">
    <property type="entry name" value="FGAM_synth_II"/>
    <property type="match status" value="1"/>
</dbReference>
<dbReference type="NCBIfam" id="NF002290">
    <property type="entry name" value="PRK01213.1"/>
    <property type="match status" value="1"/>
</dbReference>
<dbReference type="PANTHER" id="PTHR43555">
    <property type="entry name" value="PHOSPHORIBOSYLFORMYLGLYCINAMIDINE SYNTHASE SUBUNIT PURL"/>
    <property type="match status" value="1"/>
</dbReference>
<dbReference type="PANTHER" id="PTHR43555:SF1">
    <property type="entry name" value="PHOSPHORIBOSYLFORMYLGLYCINAMIDINE SYNTHASE SUBUNIT PURL"/>
    <property type="match status" value="1"/>
</dbReference>
<dbReference type="Pfam" id="PF00586">
    <property type="entry name" value="AIRS"/>
    <property type="match status" value="2"/>
</dbReference>
<dbReference type="Pfam" id="PF02769">
    <property type="entry name" value="AIRS_C"/>
    <property type="match status" value="2"/>
</dbReference>
<dbReference type="Pfam" id="PF18072">
    <property type="entry name" value="FGAR-AT_linker"/>
    <property type="match status" value="1"/>
</dbReference>
<dbReference type="PIRSF" id="PIRSF001587">
    <property type="entry name" value="FGAM_synthase_II"/>
    <property type="match status" value="1"/>
</dbReference>
<dbReference type="SUPFAM" id="SSF56042">
    <property type="entry name" value="PurM C-terminal domain-like"/>
    <property type="match status" value="2"/>
</dbReference>
<dbReference type="SUPFAM" id="SSF55326">
    <property type="entry name" value="PurM N-terminal domain-like"/>
    <property type="match status" value="2"/>
</dbReference>
<organism>
    <name type="scientific">Mycobacterium leprae (strain Br4923)</name>
    <dbReference type="NCBI Taxonomy" id="561304"/>
    <lineage>
        <taxon>Bacteria</taxon>
        <taxon>Bacillati</taxon>
        <taxon>Actinomycetota</taxon>
        <taxon>Actinomycetes</taxon>
        <taxon>Mycobacteriales</taxon>
        <taxon>Mycobacteriaceae</taxon>
        <taxon>Mycobacterium</taxon>
    </lineage>
</organism>
<reference key="1">
    <citation type="journal article" date="2009" name="Nat. Genet.">
        <title>Comparative genomic and phylogeographic analysis of Mycobacterium leprae.</title>
        <authorList>
            <person name="Monot M."/>
            <person name="Honore N."/>
            <person name="Garnier T."/>
            <person name="Zidane N."/>
            <person name="Sherafi D."/>
            <person name="Paniz-Mondolfi A."/>
            <person name="Matsuoka M."/>
            <person name="Taylor G.M."/>
            <person name="Donoghue H.D."/>
            <person name="Bouwman A."/>
            <person name="Mays S."/>
            <person name="Watson C."/>
            <person name="Lockwood D."/>
            <person name="Khamispour A."/>
            <person name="Dowlati Y."/>
            <person name="Jianping S."/>
            <person name="Rea T.H."/>
            <person name="Vera-Cabrera L."/>
            <person name="Stefani M.M."/>
            <person name="Banu S."/>
            <person name="Macdonald M."/>
            <person name="Sapkota B.R."/>
            <person name="Spencer J.S."/>
            <person name="Thomas J."/>
            <person name="Harshman K."/>
            <person name="Singh P."/>
            <person name="Busso P."/>
            <person name="Gattiker A."/>
            <person name="Rougemont J."/>
            <person name="Brennan P.J."/>
            <person name="Cole S.T."/>
        </authorList>
    </citation>
    <scope>NUCLEOTIDE SEQUENCE [LARGE SCALE GENOMIC DNA]</scope>
    <source>
        <strain>Br4923</strain>
    </source>
</reference>
<feature type="chain" id="PRO_1000206042" description="Phosphoribosylformylglycinamidine synthase subunit PurL">
    <location>
        <begin position="1"/>
        <end position="754"/>
    </location>
</feature>
<feature type="region of interest" description="Disordered" evidence="2">
    <location>
        <begin position="386"/>
        <end position="412"/>
    </location>
</feature>
<feature type="active site" evidence="1">
    <location>
        <position position="54"/>
    </location>
</feature>
<feature type="active site" description="Proton acceptor" evidence="1">
    <location>
        <position position="105"/>
    </location>
</feature>
<feature type="binding site" evidence="1">
    <location>
        <position position="57"/>
    </location>
    <ligand>
        <name>ATP</name>
        <dbReference type="ChEBI" id="CHEBI:30616"/>
    </ligand>
</feature>
<feature type="binding site" evidence="1">
    <location>
        <position position="101"/>
    </location>
    <ligand>
        <name>ATP</name>
        <dbReference type="ChEBI" id="CHEBI:30616"/>
    </ligand>
</feature>
<feature type="binding site" evidence="1">
    <location>
        <position position="103"/>
    </location>
    <ligand>
        <name>Mg(2+)</name>
        <dbReference type="ChEBI" id="CHEBI:18420"/>
        <label>1</label>
    </ligand>
</feature>
<feature type="binding site" evidence="1">
    <location>
        <begin position="104"/>
        <end position="107"/>
    </location>
    <ligand>
        <name>substrate</name>
    </ligand>
</feature>
<feature type="binding site" evidence="1">
    <location>
        <position position="126"/>
    </location>
    <ligand>
        <name>substrate</name>
    </ligand>
</feature>
<feature type="binding site" evidence="1">
    <location>
        <position position="127"/>
    </location>
    <ligand>
        <name>Mg(2+)</name>
        <dbReference type="ChEBI" id="CHEBI:18420"/>
        <label>2</label>
    </ligand>
</feature>
<feature type="binding site" evidence="1">
    <location>
        <position position="252"/>
    </location>
    <ligand>
        <name>substrate</name>
    </ligand>
</feature>
<feature type="binding site" evidence="1">
    <location>
        <position position="280"/>
    </location>
    <ligand>
        <name>Mg(2+)</name>
        <dbReference type="ChEBI" id="CHEBI:18420"/>
        <label>2</label>
    </ligand>
</feature>
<feature type="binding site" evidence="1">
    <location>
        <begin position="324"/>
        <end position="326"/>
    </location>
    <ligand>
        <name>substrate</name>
    </ligand>
</feature>
<feature type="binding site" evidence="1">
    <location>
        <position position="512"/>
    </location>
    <ligand>
        <name>ATP</name>
        <dbReference type="ChEBI" id="CHEBI:30616"/>
    </ligand>
</feature>
<feature type="binding site" evidence="1">
    <location>
        <position position="549"/>
    </location>
    <ligand>
        <name>ATP</name>
        <dbReference type="ChEBI" id="CHEBI:30616"/>
    </ligand>
</feature>
<feature type="binding site" evidence="1">
    <location>
        <position position="550"/>
    </location>
    <ligand>
        <name>Mg(2+)</name>
        <dbReference type="ChEBI" id="CHEBI:18420"/>
        <label>1</label>
    </ligand>
</feature>
<feature type="binding site" evidence="1">
    <location>
        <position position="552"/>
    </location>
    <ligand>
        <name>substrate</name>
    </ligand>
</feature>
<accession>B8ZSV5</accession>
<comment type="function">
    <text evidence="1">Part of the phosphoribosylformylglycinamidine synthase complex involved in the purines biosynthetic pathway. Catalyzes the ATP-dependent conversion of formylglycinamide ribonucleotide (FGAR) and glutamine to yield formylglycinamidine ribonucleotide (FGAM) and glutamate. The FGAM synthase complex is composed of three subunits. PurQ produces an ammonia molecule by converting glutamine to glutamate. PurL transfers the ammonia molecule to FGAR to form FGAM in an ATP-dependent manner. PurS interacts with PurQ and PurL and is thought to assist in the transfer of the ammonia molecule from PurQ to PurL.</text>
</comment>
<comment type="catalytic activity">
    <reaction evidence="1">
        <text>N(2)-formyl-N(1)-(5-phospho-beta-D-ribosyl)glycinamide + L-glutamine + ATP + H2O = 2-formamido-N(1)-(5-O-phospho-beta-D-ribosyl)acetamidine + L-glutamate + ADP + phosphate + H(+)</text>
        <dbReference type="Rhea" id="RHEA:17129"/>
        <dbReference type="ChEBI" id="CHEBI:15377"/>
        <dbReference type="ChEBI" id="CHEBI:15378"/>
        <dbReference type="ChEBI" id="CHEBI:29985"/>
        <dbReference type="ChEBI" id="CHEBI:30616"/>
        <dbReference type="ChEBI" id="CHEBI:43474"/>
        <dbReference type="ChEBI" id="CHEBI:58359"/>
        <dbReference type="ChEBI" id="CHEBI:147286"/>
        <dbReference type="ChEBI" id="CHEBI:147287"/>
        <dbReference type="ChEBI" id="CHEBI:456216"/>
        <dbReference type="EC" id="6.3.5.3"/>
    </reaction>
</comment>
<comment type="pathway">
    <text evidence="1">Purine metabolism; IMP biosynthesis via de novo pathway; 5-amino-1-(5-phospho-D-ribosyl)imidazole from N(2)-formyl-N(1)-(5-phospho-D-ribosyl)glycinamide: step 1/2.</text>
</comment>
<comment type="subunit">
    <text evidence="1">Monomer. Part of the FGAM synthase complex composed of 1 PurL, 1 PurQ and 2 PurS subunits.</text>
</comment>
<comment type="subcellular location">
    <subcellularLocation>
        <location evidence="1">Cytoplasm</location>
    </subcellularLocation>
</comment>
<comment type="similarity">
    <text evidence="1">Belongs to the FGAMS family.</text>
</comment>
<gene>
    <name evidence="1" type="primary">purL</name>
    <name type="ordered locus">MLBr02211</name>
</gene>
<sequence length="754" mass="80131">MIDTVEYAATTPDQPQPFAELGLREDEYQRVREILGRRPTDTELAMYSVMWSEHCSYKSSKVHLRYFGETTTEEMRTGMLAGIGENAGVVDIGDGWAVTFKVESHNHPSYVEPYQGAATGVGGIVRDIMAMGARPVAVMDQLRFGAADALDTRRVLDGVVRGIGGYGNSLGLPNIGGETVFDSCYDGNPLVNALCVGVLRQEDLHLAFASGAGNKIILFGACTGLDGIGGVSVLASDTFDAEGARKKLPSVQVGDPFMEKVLIECCLELYAGGLVIGIQDLGGAGLSCATSELASAGDVGMAIQLDTVPRRAKDMTPAEVFCSESQERMCAVVAPENVDAFLAVCRKWEVLATVIGEVTDGDRLRITWHGETVVDVPPRTVAHEGPVYQRPVSRPESQEALNADSSKGLPRPVSGDELRATLLALLGSPHLCSRAFITEQYDRYVRGNTVLAEHADAGVLRIDESTGRGIALSTDASGRYTRLDPYAGAQLALAEAYRNVAVTGATPVAVTNCLNFGSPEDPGVMWQFAQAVRGLADGCAALKIPVTGGNVSFYNQTGAVAILPTPVVGVLGVLDNVARRIHTSLGTEPGEILMLLGDTYDEFDGSVWAQVMAGHLGGLPPMVDLAREKLLAEVLSSASRDELVSAAHDLSEGGLAQAIVESALAGETGCRIALPEDADPFVMLFSESAGRVLVAVPRPEESRFRSMCEARGLPAMRIGVVDQGSDSIEVRGQFTVSLAELRMTFEAVLPRFFG</sequence>
<keyword id="KW-0067">ATP-binding</keyword>
<keyword id="KW-0963">Cytoplasm</keyword>
<keyword id="KW-0436">Ligase</keyword>
<keyword id="KW-0460">Magnesium</keyword>
<keyword id="KW-0479">Metal-binding</keyword>
<keyword id="KW-0547">Nucleotide-binding</keyword>
<keyword id="KW-0658">Purine biosynthesis</keyword>
<proteinExistence type="inferred from homology"/>
<protein>
    <recommendedName>
        <fullName evidence="1">Phosphoribosylformylglycinamidine synthase subunit PurL</fullName>
        <shortName evidence="1">FGAM synthase</shortName>
        <ecNumber evidence="1">6.3.5.3</ecNumber>
    </recommendedName>
    <alternativeName>
        <fullName evidence="1">Formylglycinamide ribonucleotide amidotransferase subunit II</fullName>
        <shortName evidence="1">FGAR amidotransferase II</shortName>
        <shortName evidence="1">FGAR-AT II</shortName>
    </alternativeName>
    <alternativeName>
        <fullName evidence="1">Glutamine amidotransferase PurL</fullName>
    </alternativeName>
    <alternativeName>
        <fullName evidence="1">Phosphoribosylformylglycinamidine synthase subunit II</fullName>
    </alternativeName>
</protein>
<name>PURL_MYCLB</name>
<evidence type="ECO:0000255" key="1">
    <source>
        <dbReference type="HAMAP-Rule" id="MF_00420"/>
    </source>
</evidence>
<evidence type="ECO:0000256" key="2">
    <source>
        <dbReference type="SAM" id="MobiDB-lite"/>
    </source>
</evidence>